<name>SYD_ENTFA</name>
<accession>Q833I2</accession>
<proteinExistence type="inferred from homology"/>
<sequence>MEKRTTYCGNVSAEFIEKEVVLKGWVQKRRDLGGVIFIDLRDREGIVQVVFNPEKSKEAWEIADKCRSEYVIEVKGQVVYRDKEAINPKMKTGEFEVMATDITILNTAKTTPFTIEDDNNVNDELRMKYRYLDLRRPSMTNNIKLRHQVTKTIRHYLDNHDFLDIETPYLGKSTPEGARDYLVPSRVHAGHFYALPQSPQLFKQLLMGAGFDRYYQIVRCFRDEDLRGDRQPEFTQIDIETTFLTPEEIQTYTENMLAEVMKETKGIEISVPFPRMSYDEAMARYGSDKPDTRFAMELIDVAEVVKDVDFKVFQAALENGGHVKALNAKGAADKYSRKDMDNLGKYVSQFGAKGLAWLKVEEDGLKGPIAKFLTEVSDELIAATNAEVGDILMFGADKPEIVAAALGAVRTRLGKELGLIDESKFNFLWIVDWPLFEYDEEAGRYVSAHHPFTQPKAEDVDRLATDPASVYAEAYDVVLNGYELGGGSLRIHTRELQEKMFETLGFTKEEAQDQFGFLLDALDYGFPPHGGIALGLDRLAMLLAGEENIREVIAFPKNGKAIDPMNNAPSLVSPLQLFELNIDVTAIDE</sequence>
<comment type="function">
    <text evidence="1">Catalyzes the attachment of L-aspartate to tRNA(Asp) in a two-step reaction: L-aspartate is first activated by ATP to form Asp-AMP and then transferred to the acceptor end of tRNA(Asp).</text>
</comment>
<comment type="catalytic activity">
    <reaction evidence="1">
        <text>tRNA(Asp) + L-aspartate + ATP = L-aspartyl-tRNA(Asp) + AMP + diphosphate</text>
        <dbReference type="Rhea" id="RHEA:19649"/>
        <dbReference type="Rhea" id="RHEA-COMP:9660"/>
        <dbReference type="Rhea" id="RHEA-COMP:9678"/>
        <dbReference type="ChEBI" id="CHEBI:29991"/>
        <dbReference type="ChEBI" id="CHEBI:30616"/>
        <dbReference type="ChEBI" id="CHEBI:33019"/>
        <dbReference type="ChEBI" id="CHEBI:78442"/>
        <dbReference type="ChEBI" id="CHEBI:78516"/>
        <dbReference type="ChEBI" id="CHEBI:456215"/>
        <dbReference type="EC" id="6.1.1.12"/>
    </reaction>
</comment>
<comment type="subunit">
    <text evidence="1">Homodimer.</text>
</comment>
<comment type="subcellular location">
    <subcellularLocation>
        <location evidence="1">Cytoplasm</location>
    </subcellularLocation>
</comment>
<comment type="similarity">
    <text evidence="1">Belongs to the class-II aminoacyl-tRNA synthetase family. Type 1 subfamily.</text>
</comment>
<dbReference type="EC" id="6.1.1.12" evidence="1"/>
<dbReference type="EMBL" id="AE016830">
    <property type="protein sequence ID" value="AAO81716.1"/>
    <property type="molecule type" value="Genomic_DNA"/>
</dbReference>
<dbReference type="RefSeq" id="NP_815646.1">
    <property type="nucleotide sequence ID" value="NC_004668.1"/>
</dbReference>
<dbReference type="RefSeq" id="WP_002379571.1">
    <property type="nucleotide sequence ID" value="NZ_KE136528.1"/>
</dbReference>
<dbReference type="SMR" id="Q833I2"/>
<dbReference type="STRING" id="226185.EF_1970"/>
<dbReference type="EnsemblBacteria" id="AAO81716">
    <property type="protein sequence ID" value="AAO81716"/>
    <property type="gene ID" value="EF_1970"/>
</dbReference>
<dbReference type="KEGG" id="efa:EF1970"/>
<dbReference type="PATRIC" id="fig|226185.45.peg.1555"/>
<dbReference type="eggNOG" id="COG0173">
    <property type="taxonomic scope" value="Bacteria"/>
</dbReference>
<dbReference type="HOGENOM" id="CLU_014330_3_2_9"/>
<dbReference type="Proteomes" id="UP000001415">
    <property type="component" value="Chromosome"/>
</dbReference>
<dbReference type="GO" id="GO:0005737">
    <property type="term" value="C:cytoplasm"/>
    <property type="evidence" value="ECO:0007669"/>
    <property type="project" value="UniProtKB-SubCell"/>
</dbReference>
<dbReference type="GO" id="GO:0004815">
    <property type="term" value="F:aspartate-tRNA ligase activity"/>
    <property type="evidence" value="ECO:0007669"/>
    <property type="project" value="UniProtKB-UniRule"/>
</dbReference>
<dbReference type="GO" id="GO:0005524">
    <property type="term" value="F:ATP binding"/>
    <property type="evidence" value="ECO:0007669"/>
    <property type="project" value="UniProtKB-UniRule"/>
</dbReference>
<dbReference type="GO" id="GO:0140096">
    <property type="term" value="F:catalytic activity, acting on a protein"/>
    <property type="evidence" value="ECO:0007669"/>
    <property type="project" value="UniProtKB-ARBA"/>
</dbReference>
<dbReference type="GO" id="GO:0003676">
    <property type="term" value="F:nucleic acid binding"/>
    <property type="evidence" value="ECO:0007669"/>
    <property type="project" value="InterPro"/>
</dbReference>
<dbReference type="GO" id="GO:0016740">
    <property type="term" value="F:transferase activity"/>
    <property type="evidence" value="ECO:0007669"/>
    <property type="project" value="UniProtKB-ARBA"/>
</dbReference>
<dbReference type="GO" id="GO:0006422">
    <property type="term" value="P:aspartyl-tRNA aminoacylation"/>
    <property type="evidence" value="ECO:0007669"/>
    <property type="project" value="UniProtKB-UniRule"/>
</dbReference>
<dbReference type="CDD" id="cd00777">
    <property type="entry name" value="AspRS_core"/>
    <property type="match status" value="1"/>
</dbReference>
<dbReference type="CDD" id="cd04317">
    <property type="entry name" value="EcAspRS_like_N"/>
    <property type="match status" value="1"/>
</dbReference>
<dbReference type="Gene3D" id="3.30.930.10">
    <property type="entry name" value="Bira Bifunctional Protein, Domain 2"/>
    <property type="match status" value="1"/>
</dbReference>
<dbReference type="Gene3D" id="3.30.1360.30">
    <property type="entry name" value="GAD-like domain"/>
    <property type="match status" value="1"/>
</dbReference>
<dbReference type="Gene3D" id="2.40.50.140">
    <property type="entry name" value="Nucleic acid-binding proteins"/>
    <property type="match status" value="1"/>
</dbReference>
<dbReference type="HAMAP" id="MF_00044">
    <property type="entry name" value="Asp_tRNA_synth_type1"/>
    <property type="match status" value="1"/>
</dbReference>
<dbReference type="InterPro" id="IPR004364">
    <property type="entry name" value="Aa-tRNA-synt_II"/>
</dbReference>
<dbReference type="InterPro" id="IPR006195">
    <property type="entry name" value="aa-tRNA-synth_II"/>
</dbReference>
<dbReference type="InterPro" id="IPR045864">
    <property type="entry name" value="aa-tRNA-synth_II/BPL/LPL"/>
</dbReference>
<dbReference type="InterPro" id="IPR004524">
    <property type="entry name" value="Asp-tRNA-ligase_1"/>
</dbReference>
<dbReference type="InterPro" id="IPR047089">
    <property type="entry name" value="Asp-tRNA-ligase_1_N"/>
</dbReference>
<dbReference type="InterPro" id="IPR002312">
    <property type="entry name" value="Asp/Asn-tRNA-synth_IIb"/>
</dbReference>
<dbReference type="InterPro" id="IPR047090">
    <property type="entry name" value="AspRS_core"/>
</dbReference>
<dbReference type="InterPro" id="IPR004115">
    <property type="entry name" value="GAD-like_sf"/>
</dbReference>
<dbReference type="InterPro" id="IPR029351">
    <property type="entry name" value="GAD_dom"/>
</dbReference>
<dbReference type="InterPro" id="IPR012340">
    <property type="entry name" value="NA-bd_OB-fold"/>
</dbReference>
<dbReference type="InterPro" id="IPR004365">
    <property type="entry name" value="NA-bd_OB_tRNA"/>
</dbReference>
<dbReference type="NCBIfam" id="TIGR00459">
    <property type="entry name" value="aspS_bact"/>
    <property type="match status" value="1"/>
</dbReference>
<dbReference type="NCBIfam" id="NF001750">
    <property type="entry name" value="PRK00476.1"/>
    <property type="match status" value="1"/>
</dbReference>
<dbReference type="PANTHER" id="PTHR22594:SF5">
    <property type="entry name" value="ASPARTATE--TRNA LIGASE, MITOCHONDRIAL"/>
    <property type="match status" value="1"/>
</dbReference>
<dbReference type="PANTHER" id="PTHR22594">
    <property type="entry name" value="ASPARTYL/LYSYL-TRNA SYNTHETASE"/>
    <property type="match status" value="1"/>
</dbReference>
<dbReference type="Pfam" id="PF02938">
    <property type="entry name" value="GAD"/>
    <property type="match status" value="1"/>
</dbReference>
<dbReference type="Pfam" id="PF00152">
    <property type="entry name" value="tRNA-synt_2"/>
    <property type="match status" value="1"/>
</dbReference>
<dbReference type="Pfam" id="PF01336">
    <property type="entry name" value="tRNA_anti-codon"/>
    <property type="match status" value="1"/>
</dbReference>
<dbReference type="PRINTS" id="PR01042">
    <property type="entry name" value="TRNASYNTHASP"/>
</dbReference>
<dbReference type="SUPFAM" id="SSF55681">
    <property type="entry name" value="Class II aaRS and biotin synthetases"/>
    <property type="match status" value="1"/>
</dbReference>
<dbReference type="SUPFAM" id="SSF55261">
    <property type="entry name" value="GAD domain-like"/>
    <property type="match status" value="1"/>
</dbReference>
<dbReference type="SUPFAM" id="SSF50249">
    <property type="entry name" value="Nucleic acid-binding proteins"/>
    <property type="match status" value="1"/>
</dbReference>
<dbReference type="PROSITE" id="PS50862">
    <property type="entry name" value="AA_TRNA_LIGASE_II"/>
    <property type="match status" value="1"/>
</dbReference>
<feature type="chain" id="PRO_0000110871" description="Aspartate--tRNA ligase">
    <location>
        <begin position="1"/>
        <end position="589"/>
    </location>
</feature>
<feature type="region of interest" description="Aspartate" evidence="1">
    <location>
        <begin position="200"/>
        <end position="203"/>
    </location>
</feature>
<feature type="binding site" evidence="1">
    <location>
        <position position="176"/>
    </location>
    <ligand>
        <name>L-aspartate</name>
        <dbReference type="ChEBI" id="CHEBI:29991"/>
    </ligand>
</feature>
<feature type="binding site" evidence="1">
    <location>
        <begin position="222"/>
        <end position="224"/>
    </location>
    <ligand>
        <name>ATP</name>
        <dbReference type="ChEBI" id="CHEBI:30616"/>
    </ligand>
</feature>
<feature type="binding site" evidence="1">
    <location>
        <position position="222"/>
    </location>
    <ligand>
        <name>L-aspartate</name>
        <dbReference type="ChEBI" id="CHEBI:29991"/>
    </ligand>
</feature>
<feature type="binding site" evidence="1">
    <location>
        <position position="231"/>
    </location>
    <ligand>
        <name>ATP</name>
        <dbReference type="ChEBI" id="CHEBI:30616"/>
    </ligand>
</feature>
<feature type="binding site" evidence="1">
    <location>
        <position position="449"/>
    </location>
    <ligand>
        <name>L-aspartate</name>
        <dbReference type="ChEBI" id="CHEBI:29991"/>
    </ligand>
</feature>
<feature type="binding site" evidence="1">
    <location>
        <position position="483"/>
    </location>
    <ligand>
        <name>ATP</name>
        <dbReference type="ChEBI" id="CHEBI:30616"/>
    </ligand>
</feature>
<feature type="binding site" evidence="1">
    <location>
        <position position="490"/>
    </location>
    <ligand>
        <name>L-aspartate</name>
        <dbReference type="ChEBI" id="CHEBI:29991"/>
    </ligand>
</feature>
<feature type="binding site" evidence="1">
    <location>
        <begin position="535"/>
        <end position="538"/>
    </location>
    <ligand>
        <name>ATP</name>
        <dbReference type="ChEBI" id="CHEBI:30616"/>
    </ligand>
</feature>
<organism>
    <name type="scientific">Enterococcus faecalis (strain ATCC 700802 / V583)</name>
    <dbReference type="NCBI Taxonomy" id="226185"/>
    <lineage>
        <taxon>Bacteria</taxon>
        <taxon>Bacillati</taxon>
        <taxon>Bacillota</taxon>
        <taxon>Bacilli</taxon>
        <taxon>Lactobacillales</taxon>
        <taxon>Enterococcaceae</taxon>
        <taxon>Enterococcus</taxon>
    </lineage>
</organism>
<evidence type="ECO:0000255" key="1">
    <source>
        <dbReference type="HAMAP-Rule" id="MF_00044"/>
    </source>
</evidence>
<reference key="1">
    <citation type="journal article" date="2003" name="Science">
        <title>Role of mobile DNA in the evolution of vancomycin-resistant Enterococcus faecalis.</title>
        <authorList>
            <person name="Paulsen I.T."/>
            <person name="Banerjei L."/>
            <person name="Myers G.S.A."/>
            <person name="Nelson K.E."/>
            <person name="Seshadri R."/>
            <person name="Read T.D."/>
            <person name="Fouts D.E."/>
            <person name="Eisen J.A."/>
            <person name="Gill S.R."/>
            <person name="Heidelberg J.F."/>
            <person name="Tettelin H."/>
            <person name="Dodson R.J."/>
            <person name="Umayam L.A."/>
            <person name="Brinkac L.M."/>
            <person name="Beanan M.J."/>
            <person name="Daugherty S.C."/>
            <person name="DeBoy R.T."/>
            <person name="Durkin S.A."/>
            <person name="Kolonay J.F."/>
            <person name="Madupu R."/>
            <person name="Nelson W.C."/>
            <person name="Vamathevan J.J."/>
            <person name="Tran B."/>
            <person name="Upton J."/>
            <person name="Hansen T."/>
            <person name="Shetty J."/>
            <person name="Khouri H.M."/>
            <person name="Utterback T.R."/>
            <person name="Radune D."/>
            <person name="Ketchum K.A."/>
            <person name="Dougherty B.A."/>
            <person name="Fraser C.M."/>
        </authorList>
    </citation>
    <scope>NUCLEOTIDE SEQUENCE [LARGE SCALE GENOMIC DNA]</scope>
    <source>
        <strain>ATCC 700802 / V583</strain>
    </source>
</reference>
<protein>
    <recommendedName>
        <fullName evidence="1">Aspartate--tRNA ligase</fullName>
        <ecNumber evidence="1">6.1.1.12</ecNumber>
    </recommendedName>
    <alternativeName>
        <fullName evidence="1">Aspartyl-tRNA synthetase</fullName>
        <shortName evidence="1">AspRS</shortName>
    </alternativeName>
</protein>
<gene>
    <name evidence="1" type="primary">aspS</name>
    <name type="ordered locus">EF_1970</name>
</gene>
<keyword id="KW-0030">Aminoacyl-tRNA synthetase</keyword>
<keyword id="KW-0067">ATP-binding</keyword>
<keyword id="KW-0963">Cytoplasm</keyword>
<keyword id="KW-0436">Ligase</keyword>
<keyword id="KW-0547">Nucleotide-binding</keyword>
<keyword id="KW-0648">Protein biosynthesis</keyword>
<keyword id="KW-1185">Reference proteome</keyword>